<accession>B7L7D2</accession>
<feature type="chain" id="PRO_1000147186" description="Ureidoglycolate lyase">
    <location>
        <begin position="1"/>
        <end position="160"/>
    </location>
</feature>
<proteinExistence type="inferred from homology"/>
<evidence type="ECO:0000255" key="1">
    <source>
        <dbReference type="HAMAP-Rule" id="MF_00616"/>
    </source>
</evidence>
<reference key="1">
    <citation type="journal article" date="2009" name="PLoS Genet.">
        <title>Organised genome dynamics in the Escherichia coli species results in highly diverse adaptive paths.</title>
        <authorList>
            <person name="Touchon M."/>
            <person name="Hoede C."/>
            <person name="Tenaillon O."/>
            <person name="Barbe V."/>
            <person name="Baeriswyl S."/>
            <person name="Bidet P."/>
            <person name="Bingen E."/>
            <person name="Bonacorsi S."/>
            <person name="Bouchier C."/>
            <person name="Bouvet O."/>
            <person name="Calteau A."/>
            <person name="Chiapello H."/>
            <person name="Clermont O."/>
            <person name="Cruveiller S."/>
            <person name="Danchin A."/>
            <person name="Diard M."/>
            <person name="Dossat C."/>
            <person name="Karoui M.E."/>
            <person name="Frapy E."/>
            <person name="Garry L."/>
            <person name="Ghigo J.M."/>
            <person name="Gilles A.M."/>
            <person name="Johnson J."/>
            <person name="Le Bouguenec C."/>
            <person name="Lescat M."/>
            <person name="Mangenot S."/>
            <person name="Martinez-Jehanne V."/>
            <person name="Matic I."/>
            <person name="Nassif X."/>
            <person name="Oztas S."/>
            <person name="Petit M.A."/>
            <person name="Pichon C."/>
            <person name="Rouy Z."/>
            <person name="Ruf C.S."/>
            <person name="Schneider D."/>
            <person name="Tourret J."/>
            <person name="Vacherie B."/>
            <person name="Vallenet D."/>
            <person name="Medigue C."/>
            <person name="Rocha E.P.C."/>
            <person name="Denamur E."/>
        </authorList>
    </citation>
    <scope>NUCLEOTIDE SEQUENCE [LARGE SCALE GENOMIC DNA]</scope>
    <source>
        <strain>55989 / EAEC</strain>
    </source>
</reference>
<protein>
    <recommendedName>
        <fullName evidence="1">Ureidoglycolate lyase</fullName>
        <ecNumber evidence="1">4.3.2.3</ecNumber>
    </recommendedName>
    <alternativeName>
        <fullName evidence="1">Ureidoglycolatase</fullName>
    </alternativeName>
</protein>
<gene>
    <name evidence="1" type="primary">allA</name>
    <name type="ordered locus">EC55989_0520</name>
</gene>
<name>ALLA_ECO55</name>
<organism>
    <name type="scientific">Escherichia coli (strain 55989 / EAEC)</name>
    <dbReference type="NCBI Taxonomy" id="585055"/>
    <lineage>
        <taxon>Bacteria</taxon>
        <taxon>Pseudomonadati</taxon>
        <taxon>Pseudomonadota</taxon>
        <taxon>Gammaproteobacteria</taxon>
        <taxon>Enterobacterales</taxon>
        <taxon>Enterobacteriaceae</taxon>
        <taxon>Escherichia</taxon>
    </lineage>
</organism>
<dbReference type="EC" id="4.3.2.3" evidence="1"/>
<dbReference type="EMBL" id="CU928145">
    <property type="protein sequence ID" value="CAU96393.1"/>
    <property type="molecule type" value="Genomic_DNA"/>
</dbReference>
<dbReference type="RefSeq" id="WP_000776392.1">
    <property type="nucleotide sequence ID" value="NC_011748.1"/>
</dbReference>
<dbReference type="SMR" id="B7L7D2"/>
<dbReference type="KEGG" id="eck:EC55989_0520"/>
<dbReference type="HOGENOM" id="CLU_070848_1_1_6"/>
<dbReference type="UniPathway" id="UPA00395"/>
<dbReference type="Proteomes" id="UP000000746">
    <property type="component" value="Chromosome"/>
</dbReference>
<dbReference type="GO" id="GO:0004848">
    <property type="term" value="F:ureidoglycolate hydrolase activity"/>
    <property type="evidence" value="ECO:0007669"/>
    <property type="project" value="InterPro"/>
</dbReference>
<dbReference type="GO" id="GO:0050385">
    <property type="term" value="F:ureidoglycolate lyase activity"/>
    <property type="evidence" value="ECO:0007669"/>
    <property type="project" value="UniProtKB-UniRule"/>
</dbReference>
<dbReference type="GO" id="GO:0000256">
    <property type="term" value="P:allantoin catabolic process"/>
    <property type="evidence" value="ECO:0007669"/>
    <property type="project" value="UniProtKB-UniRule"/>
</dbReference>
<dbReference type="GO" id="GO:0006145">
    <property type="term" value="P:purine nucleobase catabolic process"/>
    <property type="evidence" value="ECO:0007669"/>
    <property type="project" value="UniProtKB-UniRule"/>
</dbReference>
<dbReference type="CDD" id="cd20298">
    <property type="entry name" value="cupin_UAH"/>
    <property type="match status" value="1"/>
</dbReference>
<dbReference type="FunFam" id="2.60.120.480:FF:000001">
    <property type="entry name" value="Ureidoglycolate lyase"/>
    <property type="match status" value="1"/>
</dbReference>
<dbReference type="Gene3D" id="2.60.120.480">
    <property type="entry name" value="Ureidoglycolate hydrolase"/>
    <property type="match status" value="1"/>
</dbReference>
<dbReference type="HAMAP" id="MF_00616">
    <property type="entry name" value="Ureidogly_lyase"/>
    <property type="match status" value="1"/>
</dbReference>
<dbReference type="InterPro" id="IPR011051">
    <property type="entry name" value="RmlC_Cupin_sf"/>
</dbReference>
<dbReference type="InterPro" id="IPR047233">
    <property type="entry name" value="UAH_cupin"/>
</dbReference>
<dbReference type="InterPro" id="IPR007247">
    <property type="entry name" value="Ureidogly_lyase"/>
</dbReference>
<dbReference type="InterPro" id="IPR023525">
    <property type="entry name" value="Ureidogly_lyase_bac"/>
</dbReference>
<dbReference type="InterPro" id="IPR024060">
    <property type="entry name" value="Ureidoglycolate_lyase_dom_sf"/>
</dbReference>
<dbReference type="NCBIfam" id="NF002948">
    <property type="entry name" value="PRK03606.1-1"/>
    <property type="match status" value="1"/>
</dbReference>
<dbReference type="NCBIfam" id="NF009932">
    <property type="entry name" value="PRK13395.1"/>
    <property type="match status" value="1"/>
</dbReference>
<dbReference type="PANTHER" id="PTHR21221">
    <property type="entry name" value="UREIDOGLYCOLATE HYDROLASE"/>
    <property type="match status" value="1"/>
</dbReference>
<dbReference type="PANTHER" id="PTHR21221:SF1">
    <property type="entry name" value="UREIDOGLYCOLATE LYASE"/>
    <property type="match status" value="1"/>
</dbReference>
<dbReference type="Pfam" id="PF04115">
    <property type="entry name" value="Ureidogly_lyase"/>
    <property type="match status" value="1"/>
</dbReference>
<dbReference type="PIRSF" id="PIRSF017306">
    <property type="entry name" value="Ureidogly_hydro"/>
    <property type="match status" value="1"/>
</dbReference>
<dbReference type="SUPFAM" id="SSF51182">
    <property type="entry name" value="RmlC-like cupins"/>
    <property type="match status" value="1"/>
</dbReference>
<comment type="function">
    <text evidence="1">Catalyzes the catabolism of the allantoin degradation intermediate (S)-ureidoglycolate, generating urea and glyoxylate. Involved in the anaerobic utilization of allantoin as sole nitrogen source. Reinforces the induction of genes involved in the degradation of allantoin and glyoxylate by producing glyoxylate.</text>
</comment>
<comment type="catalytic activity">
    <reaction evidence="1">
        <text>(S)-ureidoglycolate = urea + glyoxylate</text>
        <dbReference type="Rhea" id="RHEA:11304"/>
        <dbReference type="ChEBI" id="CHEBI:16199"/>
        <dbReference type="ChEBI" id="CHEBI:36655"/>
        <dbReference type="ChEBI" id="CHEBI:57296"/>
        <dbReference type="EC" id="4.3.2.3"/>
    </reaction>
</comment>
<comment type="cofactor">
    <cofactor evidence="1">
        <name>Ni(2+)</name>
        <dbReference type="ChEBI" id="CHEBI:49786"/>
    </cofactor>
</comment>
<comment type="pathway">
    <text evidence="1">Nitrogen metabolism; (S)-allantoin degradation.</text>
</comment>
<comment type="subunit">
    <text evidence="1">Homodimer.</text>
</comment>
<comment type="similarity">
    <text evidence="1">Belongs to the ureidoglycolate lyase family.</text>
</comment>
<sequence length="160" mass="18249">MKLQVLPLSQEAFSAYGDVIETQQRDFFHINNGLVERYHDLALVEILEQDRTLISINRAQPANLPLTIYELERHPLGTQAFIPMKGEVFVVVVALGDDKPDLSTLRAFITNGEQGVNYHRNVWHHPLFAWQRVTDFLTIDRGGSDNCDVESIPEQELCFA</sequence>
<keyword id="KW-0456">Lyase</keyword>
<keyword id="KW-0659">Purine metabolism</keyword>
<keyword id="KW-1185">Reference proteome</keyword>